<reference key="1">
    <citation type="journal article" date="1992" name="Eur. J. Biochem.">
        <title>H2-forming methylenetetrahydromethanopterin dehydrogenase, a novel type of hydrogenase without iron-sulfur clusters in methanogenic archaea.</title>
        <authorList>
            <person name="Zirngibl C."/>
            <person name="van Dongen W."/>
            <person name="Schwoerer B."/>
            <person name="von Buenau R."/>
            <person name="Richter M."/>
            <person name="Klein A."/>
            <person name="Thauer R.K."/>
        </authorList>
    </citation>
    <scope>NUCLEOTIDE SEQUENCE [GENOMIC DNA]</scope>
</reference>
<reference key="2">
    <citation type="journal article" date="1997" name="Eur. J. Biochem.">
        <title>Overexpression of the coenzyme-F420-dependent N5,N10-methylenetetrahydromethanopterin dehydrogenase gene from the hyperthermophilic Methanopyrus kandleri.</title>
        <authorList>
            <person name="Klein A.R."/>
            <person name="Thauer R.K."/>
        </authorList>
    </citation>
    <scope>NUCLEOTIDE SEQUENCE [GENOMIC DNA]</scope>
</reference>
<reference key="3">
    <citation type="journal article" date="2002" name="Proc. Natl. Acad. Sci. U.S.A.">
        <title>The complete genome of hyperthermophile Methanopyrus kandleri AV19 and monophyly of archaeal methanogens.</title>
        <authorList>
            <person name="Slesarev A.I."/>
            <person name="Mezhevaya K.V."/>
            <person name="Makarova K.S."/>
            <person name="Polushin N.N."/>
            <person name="Shcherbinina O.V."/>
            <person name="Shakhova V.V."/>
            <person name="Belova G.I."/>
            <person name="Aravind L."/>
            <person name="Natale D.A."/>
            <person name="Rogozin I.B."/>
            <person name="Tatusov R.L."/>
            <person name="Wolf Y.I."/>
            <person name="Stetter K.O."/>
            <person name="Malykh A.G."/>
            <person name="Koonin E.V."/>
            <person name="Kozyavkin S.A."/>
        </authorList>
    </citation>
    <scope>NUCLEOTIDE SEQUENCE [LARGE SCALE GENOMIC DNA]</scope>
    <source>
        <strain>AV19 / DSM 6324 / JCM 9639 / NBRC 100938</strain>
    </source>
</reference>
<reference key="4">
    <citation type="journal article" date="1991" name="Arch. Microbiol.">
        <title>N5, N10-methylenetetrahydromethanopterin dehydrogenase (H2-forming) from the extreme thermophile Methanopyrus kandleri.</title>
        <authorList>
            <person name="Ma K."/>
            <person name="Zirngibl C."/>
            <person name="Linder D."/>
            <person name="Stetter K.O."/>
            <person name="Thauer R.K."/>
        </authorList>
    </citation>
    <scope>PROTEIN SEQUENCE OF 2-24</scope>
    <scope>FUNCTION</scope>
    <scope>CATALYTIC ACTIVITY</scope>
    <scope>ACTIVITY REGULATION</scope>
    <scope>BIOPHYSICOCHEMICAL PROPERTIES</scope>
    <scope>SUBUNIT</scope>
    <scope>PATHWAY</scope>
    <source>
        <strain>AV19 / DSM 6324 / JCM 9639 / NBRC 100938</strain>
    </source>
</reference>
<name>HMD_METKA</name>
<comment type="function">
    <text evidence="1">Catalyzes the reversible reduction of methenyl-H(4)MPT(+) to methylene-H(4)MPT.</text>
</comment>
<comment type="catalytic activity">
    <reaction evidence="1">
        <text>5,10-methenyl-5,6,7,8-tetrahydromethanopterin + H2 = 5,10-methylenetetrahydromethanopterin + H(+)</text>
        <dbReference type="Rhea" id="RHEA:20017"/>
        <dbReference type="ChEBI" id="CHEBI:15378"/>
        <dbReference type="ChEBI" id="CHEBI:18276"/>
        <dbReference type="ChEBI" id="CHEBI:57818"/>
        <dbReference type="ChEBI" id="CHEBI:58337"/>
        <dbReference type="EC" id="1.12.98.2"/>
    </reaction>
    <physiologicalReaction direction="left-to-right" evidence="1">
        <dbReference type="Rhea" id="RHEA:20018"/>
    </physiologicalReaction>
    <physiologicalReaction direction="right-to-left" evidence="1">
        <dbReference type="Rhea" id="RHEA:20019"/>
    </physiologicalReaction>
</comment>
<comment type="activity regulation">
    <text evidence="1">Activity requires salt; 100 mM potassium phosphate, potassium chloride, and sodium chloride are equally effective.</text>
</comment>
<comment type="biophysicochemical properties">
    <kinetics>
        <KM evidence="1">2 uM for H(+)</KM>
        <KM evidence="1">50 uM for 5,10-methylenetetrahydromethanopterin</KM>
    </kinetics>
    <temperatureDependence>
        <text evidence="1">Thermolabile at 90 degrees Celsius.</text>
    </temperatureDependence>
</comment>
<comment type="pathway">
    <text evidence="1">One-carbon metabolism; methanogenesis from CO(2); 5,10-methylene-5,6,7,8-tetrahydromethanopterin from 5,10-methenyl-5,6,7,8-tetrahydromethanopterin (hydrogen route): step 1/1.</text>
</comment>
<comment type="subunit">
    <text evidence="1">Homotetramer.</text>
</comment>
<comment type="similarity">
    <text evidence="4">Belongs to the HMD family.</text>
</comment>
<organism>
    <name type="scientific">Methanopyrus kandleri (strain AV19 / DSM 6324 / JCM 9639 / NBRC 100938)</name>
    <dbReference type="NCBI Taxonomy" id="190192"/>
    <lineage>
        <taxon>Archaea</taxon>
        <taxon>Methanobacteriati</taxon>
        <taxon>Methanobacteriota</taxon>
        <taxon>Methanomada group</taxon>
        <taxon>Methanopyri</taxon>
        <taxon>Methanopyrales</taxon>
        <taxon>Methanopyraceae</taxon>
        <taxon>Methanopyrus</taxon>
    </lineage>
</organism>
<feature type="initiator methionine" description="Removed" evidence="1">
    <location>
        <position position="1"/>
    </location>
</feature>
<feature type="chain" id="PRO_0000218509" description="5,10-methenyltetrahydromethanopterin hydrogenase">
    <location>
        <begin position="2"/>
        <end position="358"/>
    </location>
</feature>
<proteinExistence type="evidence at protein level"/>
<dbReference type="EC" id="1.12.98.2" evidence="1"/>
<dbReference type="EMBL" id="X60719">
    <property type="protein sequence ID" value="CAA43127.1"/>
    <property type="molecule type" value="Genomic_DNA"/>
</dbReference>
<dbReference type="EMBL" id="Y10251">
    <property type="protein sequence ID" value="CAA71299.1"/>
    <property type="molecule type" value="Genomic_DNA"/>
</dbReference>
<dbReference type="EMBL" id="AE009439">
    <property type="protein sequence ID" value="AAM01230.1"/>
    <property type="molecule type" value="Genomic_DNA"/>
</dbReference>
<dbReference type="PIR" id="S30603">
    <property type="entry name" value="S30603"/>
</dbReference>
<dbReference type="RefSeq" id="WP_011018385.1">
    <property type="nucleotide sequence ID" value="NC_003551.1"/>
</dbReference>
<dbReference type="SMR" id="Q02394"/>
<dbReference type="FunCoup" id="Q02394">
    <property type="interactions" value="63"/>
</dbReference>
<dbReference type="STRING" id="190192.MK0013"/>
<dbReference type="PaxDb" id="190192-MK0013"/>
<dbReference type="EnsemblBacteria" id="AAM01230">
    <property type="protein sequence ID" value="AAM01230"/>
    <property type="gene ID" value="MK0013"/>
</dbReference>
<dbReference type="GeneID" id="1477315"/>
<dbReference type="KEGG" id="mka:MK0013"/>
<dbReference type="PATRIC" id="fig|190192.8.peg.12"/>
<dbReference type="HOGENOM" id="CLU_772960_0_0_2"/>
<dbReference type="InParanoid" id="Q02394"/>
<dbReference type="OrthoDB" id="113982at2157"/>
<dbReference type="BRENDA" id="1.12.98.2">
    <property type="organism ID" value="3274"/>
</dbReference>
<dbReference type="UniPathway" id="UPA00640">
    <property type="reaction ID" value="UER00696"/>
</dbReference>
<dbReference type="Proteomes" id="UP000001826">
    <property type="component" value="Chromosome"/>
</dbReference>
<dbReference type="GO" id="GO:0047068">
    <property type="term" value="F:N5,N10-methenyltetrahydromethanopterin hydrogenase activity"/>
    <property type="evidence" value="ECO:0000314"/>
    <property type="project" value="MENGO"/>
</dbReference>
<dbReference type="GO" id="GO:0019386">
    <property type="term" value="P:methanogenesis, from carbon dioxide"/>
    <property type="evidence" value="ECO:0007669"/>
    <property type="project" value="UniProtKB-UniRule"/>
</dbReference>
<dbReference type="GO" id="GO:0006730">
    <property type="term" value="P:one-carbon metabolic process"/>
    <property type="evidence" value="ECO:0007669"/>
    <property type="project" value="UniProtKB-UniRule"/>
</dbReference>
<dbReference type="Gene3D" id="1.20.120.1300">
    <property type="entry name" value="Hmd, C-terminal helical subdomain"/>
    <property type="match status" value="1"/>
</dbReference>
<dbReference type="Gene3D" id="3.40.50.720">
    <property type="entry name" value="NAD(P)-binding Rossmann-like Domain"/>
    <property type="match status" value="1"/>
</dbReference>
<dbReference type="HAMAP" id="MF_01090">
    <property type="entry name" value="HMD"/>
    <property type="match status" value="1"/>
</dbReference>
<dbReference type="InterPro" id="IPR008927">
    <property type="entry name" value="6-PGluconate_DH-like_C_sf"/>
</dbReference>
<dbReference type="InterPro" id="IPR010062">
    <property type="entry name" value="HMD"/>
</dbReference>
<dbReference type="InterPro" id="IPR004889">
    <property type="entry name" value="HMD_C"/>
</dbReference>
<dbReference type="InterPro" id="IPR038182">
    <property type="entry name" value="HMD_C_sf"/>
</dbReference>
<dbReference type="InterPro" id="IPR055205">
    <property type="entry name" value="HMD_N"/>
</dbReference>
<dbReference type="InterPro" id="IPR024190">
    <property type="entry name" value="METHMP_Hmd"/>
</dbReference>
<dbReference type="InterPro" id="IPR036291">
    <property type="entry name" value="NAD(P)-bd_dom_sf"/>
</dbReference>
<dbReference type="NCBIfam" id="TIGR01723">
    <property type="entry name" value="hmd_TIGR"/>
    <property type="match status" value="1"/>
</dbReference>
<dbReference type="Pfam" id="PF03201">
    <property type="entry name" value="HMD"/>
    <property type="match status" value="1"/>
</dbReference>
<dbReference type="Pfam" id="PF22616">
    <property type="entry name" value="HMD_N"/>
    <property type="match status" value="1"/>
</dbReference>
<dbReference type="PIRSF" id="PIRSF016158">
    <property type="entry name" value="HMD"/>
    <property type="match status" value="1"/>
</dbReference>
<dbReference type="PIRSF" id="PIRSF500165">
    <property type="entry name" value="HMDI"/>
    <property type="match status" value="1"/>
</dbReference>
<dbReference type="SUPFAM" id="SSF48179">
    <property type="entry name" value="6-phosphogluconate dehydrogenase C-terminal domain-like"/>
    <property type="match status" value="1"/>
</dbReference>
<dbReference type="SUPFAM" id="SSF51735">
    <property type="entry name" value="NAD(P)-binding Rossmann-fold domains"/>
    <property type="match status" value="1"/>
</dbReference>
<accession>Q02394</accession>
<keyword id="KW-0903">Direct protein sequencing</keyword>
<keyword id="KW-0484">Methanogenesis</keyword>
<keyword id="KW-0554">One-carbon metabolism</keyword>
<keyword id="KW-0560">Oxidoreductase</keyword>
<keyword id="KW-1185">Reference proteome</keyword>
<gene>
    <name evidence="2" type="primary">hmd</name>
    <name type="ordered locus">MK0013</name>
</gene>
<sequence length="358" mass="39038">MVEINKVAILGAGCWRTHAATGITTFKRACEVADETGIKEAALTHSSVTYAVELKHLAGVDEVVLSDPVFDADGFTVVDIEEDCDVDLDEFIKAHLEGNPEDVMPKLRDYVNDIADDVPKPPKGAIHFLSPEEMEDKLDIVVTTDDAEAVEDADMIISWLPKGGVQPDIFKKIIDDIPEGCIVANTCTIPTRQFKEMFEDMGRDDLQVTSYHPATVPEHKGQVFVAEGYADEEVVEAVYELGEKARGLAFKVPGYLLGPVCDMASAVTAIVYAGLLTFRDACTDILGAPVDFTQNMAVEALQMMAKFMEEEGLDKLEEALDPAALTNTADSMNFGPLADTEILPKALEVLEKYSKKAE</sequence>
<evidence type="ECO:0000269" key="1">
    <source>
    </source>
</evidence>
<evidence type="ECO:0000303" key="2">
    <source>
    </source>
</evidence>
<evidence type="ECO:0000303" key="3">
    <source>
    </source>
</evidence>
<evidence type="ECO:0000305" key="4"/>
<protein>
    <recommendedName>
        <fullName>5,10-methenyltetrahydromethanopterin hydrogenase</fullName>
        <ecNumber evidence="1">1.12.98.2</ecNumber>
    </recommendedName>
    <alternativeName>
        <fullName>H(2)-dependent methylene-H(4)MPT dehydrogenase</fullName>
    </alternativeName>
    <alternativeName>
        <fullName>H(2)-forming N(5),N(10)-methylenetetrahydromethanopterin dehydrogenase</fullName>
    </alternativeName>
    <alternativeName>
        <fullName evidence="3">N(5),N(10)-methenyltetrahydromethanopterin dehydrogenase</fullName>
    </alternativeName>
</protein>